<evidence type="ECO:0000250" key="1"/>
<evidence type="ECO:0000250" key="2">
    <source>
        <dbReference type="UniProtKB" id="P13221"/>
    </source>
</evidence>
<evidence type="ECO:0000250" key="3">
    <source>
        <dbReference type="UniProtKB" id="P17174"/>
    </source>
</evidence>
<evidence type="ECO:0000305" key="4"/>
<proteinExistence type="evidence at transcript level"/>
<keyword id="KW-0028">Amino-acid biosynthesis</keyword>
<keyword id="KW-0032">Aminotransferase</keyword>
<keyword id="KW-0963">Cytoplasm</keyword>
<keyword id="KW-0597">Phosphoprotein</keyword>
<keyword id="KW-0663">Pyridoxal phosphate</keyword>
<keyword id="KW-1185">Reference proteome</keyword>
<keyword id="KW-0808">Transferase</keyword>
<comment type="function">
    <text evidence="2">Biosynthesis of L-glutamate from L-aspartate or L-cysteine. Important regulator of levels of glutamate, the major excitatory neurotransmitter of the vertebrate central nervous system. Acts as a scavenger of glutamate in brain neuroprotection. The aspartate aminotransferase activity is involved in hepatic glucose synthesis during development and in adipocyte glyceroneogenesis. Using L-cysteine as substrate, regulates levels of mercaptopyruvate, an important source of hydrogen sulfide. Mercaptopyruvate is converted into H(2)S via the action of 3-mercaptopyruvate sulfurtransferase (3MST). Hydrogen sulfide is an important synaptic modulator and neuroprotectant in the brain.</text>
</comment>
<comment type="catalytic activity">
    <reaction evidence="2">
        <text>L-aspartate + 2-oxoglutarate = oxaloacetate + L-glutamate</text>
        <dbReference type="Rhea" id="RHEA:21824"/>
        <dbReference type="ChEBI" id="CHEBI:16452"/>
        <dbReference type="ChEBI" id="CHEBI:16810"/>
        <dbReference type="ChEBI" id="CHEBI:29985"/>
        <dbReference type="ChEBI" id="CHEBI:29991"/>
        <dbReference type="EC" id="2.6.1.1"/>
    </reaction>
    <physiologicalReaction direction="left-to-right" evidence="2">
        <dbReference type="Rhea" id="RHEA:21825"/>
    </physiologicalReaction>
</comment>
<comment type="catalytic activity">
    <reaction evidence="2">
        <text>L-cysteine + 2-oxoglutarate = 2-oxo-3-sulfanylpropanoate + L-glutamate</text>
        <dbReference type="Rhea" id="RHEA:17441"/>
        <dbReference type="ChEBI" id="CHEBI:16810"/>
        <dbReference type="ChEBI" id="CHEBI:29985"/>
        <dbReference type="ChEBI" id="CHEBI:35235"/>
        <dbReference type="ChEBI" id="CHEBI:57678"/>
        <dbReference type="EC" id="2.6.1.3"/>
    </reaction>
    <physiologicalReaction direction="left-to-right" evidence="2">
        <dbReference type="Rhea" id="RHEA:17442"/>
    </physiologicalReaction>
</comment>
<comment type="catalytic activity">
    <reaction evidence="3">
        <text>(2S)-2-aminobutanoate + 2-oxoglutarate = 2-oxobutanoate + L-glutamate</text>
        <dbReference type="Rhea" id="RHEA:70223"/>
        <dbReference type="ChEBI" id="CHEBI:16763"/>
        <dbReference type="ChEBI" id="CHEBI:16810"/>
        <dbReference type="ChEBI" id="CHEBI:29985"/>
        <dbReference type="ChEBI" id="CHEBI:74359"/>
    </reaction>
    <physiologicalReaction direction="right-to-left" evidence="3">
        <dbReference type="Rhea" id="RHEA:70225"/>
    </physiologicalReaction>
</comment>
<comment type="catalytic activity">
    <reaction evidence="2">
        <text>3-sulfino-L-alanine + 2-oxoglutarate = 3-sulfinopyruvate + L-glutamate</text>
        <dbReference type="Rhea" id="RHEA:70295"/>
        <dbReference type="ChEBI" id="CHEBI:16810"/>
        <dbReference type="ChEBI" id="CHEBI:29985"/>
        <dbReference type="ChEBI" id="CHEBI:61085"/>
        <dbReference type="ChEBI" id="CHEBI:140699"/>
    </reaction>
    <physiologicalReaction direction="right-to-left" evidence="2">
        <dbReference type="Rhea" id="RHEA:70297"/>
    </physiologicalReaction>
</comment>
<comment type="cofactor">
    <cofactor evidence="1">
        <name>pyridoxal 5'-phosphate</name>
        <dbReference type="ChEBI" id="CHEBI:597326"/>
    </cofactor>
</comment>
<comment type="subunit">
    <text evidence="1">Homodimer.</text>
</comment>
<comment type="subcellular location">
    <subcellularLocation>
        <location evidence="1">Cytoplasm</location>
    </subcellularLocation>
</comment>
<comment type="miscellaneous">
    <text>In eukaryotes there are cytoplasmic, mitochondrial and chloroplastic isozymes.</text>
</comment>
<comment type="similarity">
    <text evidence="4">Belongs to the class-I pyridoxal-phosphate-dependent aminotransferase family.</text>
</comment>
<reference key="1">
    <citation type="submission" date="2005-06" db="EMBL/GenBank/DDBJ databases">
        <title>DNA sequences of macaque genes expressed in brain or testis and its evolutionary implications.</title>
        <authorList>
            <consortium name="International consortium for macaque cDNA sequencing and analysis"/>
        </authorList>
    </citation>
    <scope>NUCLEOTIDE SEQUENCE [LARGE SCALE MRNA]</scope>
    <source>
        <tissue>Brain cortex</tissue>
    </source>
</reference>
<protein>
    <recommendedName>
        <fullName evidence="3">Aspartate aminotransferase, cytoplasmic</fullName>
        <shortName>cAspAT</shortName>
        <ecNumber evidence="2">2.6.1.1</ecNumber>
        <ecNumber evidence="2">2.6.1.3</ecNumber>
    </recommendedName>
    <alternativeName>
        <fullName>Cysteine aminotransferase, cytoplasmic</fullName>
    </alternativeName>
    <alternativeName>
        <fullName>Cysteine transaminase, cytoplasmic</fullName>
        <shortName>cCAT</shortName>
    </alternativeName>
    <alternativeName>
        <fullName>Glutamate oxaloacetate transaminase 1</fullName>
    </alternativeName>
    <alternativeName>
        <fullName>Transaminase A</fullName>
    </alternativeName>
</protein>
<name>AATC_MACFA</name>
<feature type="chain" id="PRO_0000278662" description="Aspartate aminotransferase, cytoplasmic">
    <location>
        <begin position="1"/>
        <end position="413"/>
    </location>
</feature>
<feature type="binding site" evidence="1">
    <location>
        <position position="39"/>
    </location>
    <ligand>
        <name>L-aspartate</name>
        <dbReference type="ChEBI" id="CHEBI:29991"/>
    </ligand>
</feature>
<feature type="binding site" evidence="1">
    <location>
        <position position="141"/>
    </location>
    <ligand>
        <name>L-aspartate</name>
        <dbReference type="ChEBI" id="CHEBI:29991"/>
    </ligand>
</feature>
<feature type="binding site" evidence="1">
    <location>
        <position position="195"/>
    </location>
    <ligand>
        <name>L-aspartate</name>
        <dbReference type="ChEBI" id="CHEBI:29991"/>
    </ligand>
</feature>
<feature type="binding site" evidence="1">
    <location>
        <position position="387"/>
    </location>
    <ligand>
        <name>L-aspartate</name>
        <dbReference type="ChEBI" id="CHEBI:29991"/>
    </ligand>
</feature>
<feature type="modified residue" description="Phosphoserine" evidence="2">
    <location>
        <position position="149"/>
    </location>
</feature>
<feature type="modified residue" description="N6-(pyridoxal phosphate)lysine" evidence="1">
    <location>
        <position position="259"/>
    </location>
</feature>
<organism>
    <name type="scientific">Macaca fascicularis</name>
    <name type="common">Crab-eating macaque</name>
    <name type="synonym">Cynomolgus monkey</name>
    <dbReference type="NCBI Taxonomy" id="9541"/>
    <lineage>
        <taxon>Eukaryota</taxon>
        <taxon>Metazoa</taxon>
        <taxon>Chordata</taxon>
        <taxon>Craniata</taxon>
        <taxon>Vertebrata</taxon>
        <taxon>Euteleostomi</taxon>
        <taxon>Mammalia</taxon>
        <taxon>Eutheria</taxon>
        <taxon>Euarchontoglires</taxon>
        <taxon>Primates</taxon>
        <taxon>Haplorrhini</taxon>
        <taxon>Catarrhini</taxon>
        <taxon>Cercopithecidae</taxon>
        <taxon>Cercopithecinae</taxon>
        <taxon>Macaca</taxon>
    </lineage>
</organism>
<sequence>MAPPSVFSEVPQAQPVLVFKLTADFREDPDPRKVNLGVGAYRTDDCHPWVLPVVKKVEQKIANDNSLNHEYLPILGLAEFRSCASRLALGDDSPALKEKRVGGVQSLGGTGALRIGADFLARWYNGTNNKNTPVYVSSPTWENHNAVFSAAGFKDIRSYRYWDAEKRGLDLQGFLNDLENAPEFSIIVLHACAHNPTGTDPTPEQWKQIASVMKHRFLFPFFDSAYQGFASGNLERDAWAIRYFVSEGFEFFCAQSFSKNFGLYNERVGNLTVVGKEPESILRVLSQMEKIVRITWSNPPAQGARIVADTLSNPELFEEWKGNVKTMADRILTMRSELRARLEALKTPGTWNHITDQIGMFSYTGLNPKQVEYLINEKHIYLLPSGRINVSGLTTKNLDYVATSIHEAITKIQ</sequence>
<accession>Q4R5L1</accession>
<gene>
    <name evidence="3" type="primary">GOT1</name>
    <name type="ORF">QccE-14568</name>
</gene>
<dbReference type="EC" id="2.6.1.1" evidence="2"/>
<dbReference type="EC" id="2.6.1.3" evidence="2"/>
<dbReference type="EMBL" id="AB169532">
    <property type="protein sequence ID" value="BAE01614.1"/>
    <property type="molecule type" value="mRNA"/>
</dbReference>
<dbReference type="RefSeq" id="NP_001271859.1">
    <property type="nucleotide sequence ID" value="NM_001284930.1"/>
</dbReference>
<dbReference type="RefSeq" id="XP_045217283.1">
    <property type="nucleotide sequence ID" value="XM_045361348.2"/>
</dbReference>
<dbReference type="SMR" id="Q4R5L1"/>
<dbReference type="STRING" id="9541.ENSMFAP00000014250"/>
<dbReference type="GeneID" id="101865666"/>
<dbReference type="VEuPathDB" id="HostDB:ENSMFAG00000030230"/>
<dbReference type="eggNOG" id="KOG1412">
    <property type="taxonomic scope" value="Eukaryota"/>
</dbReference>
<dbReference type="OMA" id="GTWTHIT"/>
<dbReference type="Proteomes" id="UP000233100">
    <property type="component" value="Chromosome 9"/>
</dbReference>
<dbReference type="GO" id="GO:0005829">
    <property type="term" value="C:cytosol"/>
    <property type="evidence" value="ECO:0007669"/>
    <property type="project" value="TreeGrafter"/>
</dbReference>
<dbReference type="GO" id="GO:0004069">
    <property type="term" value="F:L-aspartate:2-oxoglutarate aminotransferase activity"/>
    <property type="evidence" value="ECO:0000250"/>
    <property type="project" value="UniProtKB"/>
</dbReference>
<dbReference type="GO" id="GO:0047801">
    <property type="term" value="F:L-cysteine transaminase activity"/>
    <property type="evidence" value="ECO:0000250"/>
    <property type="project" value="UniProtKB"/>
</dbReference>
<dbReference type="GO" id="GO:0030170">
    <property type="term" value="F:pyridoxal phosphate binding"/>
    <property type="evidence" value="ECO:0007669"/>
    <property type="project" value="InterPro"/>
</dbReference>
<dbReference type="GO" id="GO:0006103">
    <property type="term" value="P:2-oxoglutarate metabolic process"/>
    <property type="evidence" value="ECO:0000250"/>
    <property type="project" value="UniProtKB"/>
</dbReference>
<dbReference type="GO" id="GO:0006532">
    <property type="term" value="P:aspartate biosynthetic process"/>
    <property type="evidence" value="ECO:0007669"/>
    <property type="project" value="TreeGrafter"/>
</dbReference>
<dbReference type="GO" id="GO:0006531">
    <property type="term" value="P:aspartate metabolic process"/>
    <property type="evidence" value="ECO:0000250"/>
    <property type="project" value="UniProtKB"/>
</dbReference>
<dbReference type="GO" id="GO:0006536">
    <property type="term" value="P:glutamate metabolic process"/>
    <property type="evidence" value="ECO:0000250"/>
    <property type="project" value="UniProtKB"/>
</dbReference>
<dbReference type="GO" id="GO:0006114">
    <property type="term" value="P:glycerol biosynthetic process"/>
    <property type="evidence" value="ECO:0000250"/>
    <property type="project" value="UniProtKB"/>
</dbReference>
<dbReference type="CDD" id="cd00609">
    <property type="entry name" value="AAT_like"/>
    <property type="match status" value="1"/>
</dbReference>
<dbReference type="FunFam" id="3.40.640.10:FF:000044">
    <property type="entry name" value="Aspartate aminotransferase"/>
    <property type="match status" value="1"/>
</dbReference>
<dbReference type="FunFam" id="3.90.1150.10:FF:000001">
    <property type="entry name" value="Aspartate aminotransferase"/>
    <property type="match status" value="1"/>
</dbReference>
<dbReference type="Gene3D" id="3.90.1150.10">
    <property type="entry name" value="Aspartate Aminotransferase, domain 1"/>
    <property type="match status" value="1"/>
</dbReference>
<dbReference type="Gene3D" id="3.40.640.10">
    <property type="entry name" value="Type I PLP-dependent aspartate aminotransferase-like (Major domain)"/>
    <property type="match status" value="1"/>
</dbReference>
<dbReference type="InterPro" id="IPR004839">
    <property type="entry name" value="Aminotransferase_I/II_large"/>
</dbReference>
<dbReference type="InterPro" id="IPR000796">
    <property type="entry name" value="Asp_trans"/>
</dbReference>
<dbReference type="InterPro" id="IPR004838">
    <property type="entry name" value="NHTrfase_class1_PyrdxlP-BS"/>
</dbReference>
<dbReference type="InterPro" id="IPR015424">
    <property type="entry name" value="PyrdxlP-dep_Trfase"/>
</dbReference>
<dbReference type="InterPro" id="IPR015421">
    <property type="entry name" value="PyrdxlP-dep_Trfase_major"/>
</dbReference>
<dbReference type="InterPro" id="IPR015422">
    <property type="entry name" value="PyrdxlP-dep_Trfase_small"/>
</dbReference>
<dbReference type="NCBIfam" id="NF006719">
    <property type="entry name" value="PRK09257.1"/>
    <property type="match status" value="1"/>
</dbReference>
<dbReference type="PANTHER" id="PTHR11879">
    <property type="entry name" value="ASPARTATE AMINOTRANSFERASE"/>
    <property type="match status" value="1"/>
</dbReference>
<dbReference type="PANTHER" id="PTHR11879:SF3">
    <property type="entry name" value="ASPARTATE AMINOTRANSFERASE, CYTOPLASMIC"/>
    <property type="match status" value="1"/>
</dbReference>
<dbReference type="Pfam" id="PF00155">
    <property type="entry name" value="Aminotran_1_2"/>
    <property type="match status" value="1"/>
</dbReference>
<dbReference type="PRINTS" id="PR00799">
    <property type="entry name" value="TRANSAMINASE"/>
</dbReference>
<dbReference type="SUPFAM" id="SSF53383">
    <property type="entry name" value="PLP-dependent transferases"/>
    <property type="match status" value="1"/>
</dbReference>
<dbReference type="PROSITE" id="PS00105">
    <property type="entry name" value="AA_TRANSFER_CLASS_1"/>
    <property type="match status" value="1"/>
</dbReference>